<evidence type="ECO:0000255" key="1">
    <source>
        <dbReference type="HAMAP-Rule" id="MF_00451"/>
    </source>
</evidence>
<proteinExistence type="inferred from homology"/>
<feature type="chain" id="PRO_0000267795" description="Nucleoside diphosphate kinase">
    <location>
        <begin position="1"/>
        <end position="140"/>
    </location>
</feature>
<feature type="active site" description="Pros-phosphohistidine intermediate" evidence="1">
    <location>
        <position position="117"/>
    </location>
</feature>
<feature type="binding site" evidence="1">
    <location>
        <position position="11"/>
    </location>
    <ligand>
        <name>ATP</name>
        <dbReference type="ChEBI" id="CHEBI:30616"/>
    </ligand>
</feature>
<feature type="binding site" evidence="1">
    <location>
        <position position="59"/>
    </location>
    <ligand>
        <name>ATP</name>
        <dbReference type="ChEBI" id="CHEBI:30616"/>
    </ligand>
</feature>
<feature type="binding site" evidence="1">
    <location>
        <position position="87"/>
    </location>
    <ligand>
        <name>ATP</name>
        <dbReference type="ChEBI" id="CHEBI:30616"/>
    </ligand>
</feature>
<feature type="binding site" evidence="1">
    <location>
        <position position="93"/>
    </location>
    <ligand>
        <name>ATP</name>
        <dbReference type="ChEBI" id="CHEBI:30616"/>
    </ligand>
</feature>
<feature type="binding site" evidence="1">
    <location>
        <position position="104"/>
    </location>
    <ligand>
        <name>ATP</name>
        <dbReference type="ChEBI" id="CHEBI:30616"/>
    </ligand>
</feature>
<feature type="binding site" evidence="1">
    <location>
        <position position="114"/>
    </location>
    <ligand>
        <name>ATP</name>
        <dbReference type="ChEBI" id="CHEBI:30616"/>
    </ligand>
</feature>
<keyword id="KW-0067">ATP-binding</keyword>
<keyword id="KW-0963">Cytoplasm</keyword>
<keyword id="KW-0418">Kinase</keyword>
<keyword id="KW-0460">Magnesium</keyword>
<keyword id="KW-0479">Metal-binding</keyword>
<keyword id="KW-0546">Nucleotide metabolism</keyword>
<keyword id="KW-0547">Nucleotide-binding</keyword>
<keyword id="KW-0597">Phosphoprotein</keyword>
<keyword id="KW-0808">Transferase</keyword>
<reference key="1">
    <citation type="journal article" date="2006" name="Genome Biol.">
        <title>The genome of Rhizobium leguminosarum has recognizable core and accessory components.</title>
        <authorList>
            <person name="Young J.P.W."/>
            <person name="Crossman L.C."/>
            <person name="Johnston A.W.B."/>
            <person name="Thomson N.R."/>
            <person name="Ghazoui Z.F."/>
            <person name="Hull K.H."/>
            <person name="Wexler M."/>
            <person name="Curson A.R.J."/>
            <person name="Todd J.D."/>
            <person name="Poole P.S."/>
            <person name="Mauchline T.H."/>
            <person name="East A.K."/>
            <person name="Quail M.A."/>
            <person name="Churcher C."/>
            <person name="Arrowsmith C."/>
            <person name="Cherevach I."/>
            <person name="Chillingworth T."/>
            <person name="Clarke K."/>
            <person name="Cronin A."/>
            <person name="Davis P."/>
            <person name="Fraser A."/>
            <person name="Hance Z."/>
            <person name="Hauser H."/>
            <person name="Jagels K."/>
            <person name="Moule S."/>
            <person name="Mungall K."/>
            <person name="Norbertczak H."/>
            <person name="Rabbinowitsch E."/>
            <person name="Sanders M."/>
            <person name="Simmonds M."/>
            <person name="Whitehead S."/>
            <person name="Parkhill J."/>
        </authorList>
    </citation>
    <scope>NUCLEOTIDE SEQUENCE [LARGE SCALE GENOMIC DNA]</scope>
    <source>
        <strain>DSM 114642 / LMG 32736 / 3841</strain>
    </source>
</reference>
<sequence>MAIERTFSMIKPDATKRNLTGAITKMLEDAGLRVVASKRVWMSRREAEGFYAVHKDRPFFGELVEGMTSGPTIVQVLEGEGAILKNREIMGATNPANADEGTIRKVHALSIGENSVHGSDAPETAAQEIKYWFSDTEIVG</sequence>
<gene>
    <name evidence="1" type="primary">ndk</name>
    <name type="ordered locus">RL1580</name>
</gene>
<protein>
    <recommendedName>
        <fullName evidence="1">Nucleoside diphosphate kinase</fullName>
        <shortName evidence="1">NDK</shortName>
        <shortName evidence="1">NDP kinase</shortName>
        <ecNumber evidence="1">2.7.4.6</ecNumber>
    </recommendedName>
    <alternativeName>
        <fullName evidence="1">Nucleoside-2-P kinase</fullName>
    </alternativeName>
</protein>
<name>NDK_RHIJ3</name>
<dbReference type="EC" id="2.7.4.6" evidence="1"/>
<dbReference type="EMBL" id="AM236080">
    <property type="protein sequence ID" value="CAK07075.1"/>
    <property type="molecule type" value="Genomic_DNA"/>
</dbReference>
<dbReference type="RefSeq" id="WP_003547097.1">
    <property type="nucleotide sequence ID" value="NC_008380.1"/>
</dbReference>
<dbReference type="SMR" id="Q1MIY5"/>
<dbReference type="EnsemblBacteria" id="CAK07075">
    <property type="protein sequence ID" value="CAK07075"/>
    <property type="gene ID" value="RL1580"/>
</dbReference>
<dbReference type="GeneID" id="84669271"/>
<dbReference type="KEGG" id="rle:RL1580"/>
<dbReference type="eggNOG" id="COG0105">
    <property type="taxonomic scope" value="Bacteria"/>
</dbReference>
<dbReference type="HOGENOM" id="CLU_060216_8_1_5"/>
<dbReference type="Proteomes" id="UP000006575">
    <property type="component" value="Chromosome"/>
</dbReference>
<dbReference type="GO" id="GO:0005737">
    <property type="term" value="C:cytoplasm"/>
    <property type="evidence" value="ECO:0007669"/>
    <property type="project" value="UniProtKB-SubCell"/>
</dbReference>
<dbReference type="GO" id="GO:0005524">
    <property type="term" value="F:ATP binding"/>
    <property type="evidence" value="ECO:0007669"/>
    <property type="project" value="UniProtKB-UniRule"/>
</dbReference>
<dbReference type="GO" id="GO:0046872">
    <property type="term" value="F:metal ion binding"/>
    <property type="evidence" value="ECO:0007669"/>
    <property type="project" value="UniProtKB-KW"/>
</dbReference>
<dbReference type="GO" id="GO:0004550">
    <property type="term" value="F:nucleoside diphosphate kinase activity"/>
    <property type="evidence" value="ECO:0007669"/>
    <property type="project" value="UniProtKB-UniRule"/>
</dbReference>
<dbReference type="GO" id="GO:0006241">
    <property type="term" value="P:CTP biosynthetic process"/>
    <property type="evidence" value="ECO:0007669"/>
    <property type="project" value="UniProtKB-UniRule"/>
</dbReference>
<dbReference type="GO" id="GO:0006183">
    <property type="term" value="P:GTP biosynthetic process"/>
    <property type="evidence" value="ECO:0007669"/>
    <property type="project" value="UniProtKB-UniRule"/>
</dbReference>
<dbReference type="GO" id="GO:0006228">
    <property type="term" value="P:UTP biosynthetic process"/>
    <property type="evidence" value="ECO:0007669"/>
    <property type="project" value="UniProtKB-UniRule"/>
</dbReference>
<dbReference type="CDD" id="cd04413">
    <property type="entry name" value="NDPk_I"/>
    <property type="match status" value="1"/>
</dbReference>
<dbReference type="FunFam" id="3.30.70.141:FF:000039">
    <property type="entry name" value="Nucleoside diphosphate kinase B"/>
    <property type="match status" value="1"/>
</dbReference>
<dbReference type="Gene3D" id="3.30.70.141">
    <property type="entry name" value="Nucleoside diphosphate kinase-like domain"/>
    <property type="match status" value="1"/>
</dbReference>
<dbReference type="HAMAP" id="MF_00451">
    <property type="entry name" value="NDP_kinase"/>
    <property type="match status" value="1"/>
</dbReference>
<dbReference type="InterPro" id="IPR034907">
    <property type="entry name" value="NDK-like_dom"/>
</dbReference>
<dbReference type="InterPro" id="IPR036850">
    <property type="entry name" value="NDK-like_dom_sf"/>
</dbReference>
<dbReference type="InterPro" id="IPR001564">
    <property type="entry name" value="Nucleoside_diP_kinase"/>
</dbReference>
<dbReference type="InterPro" id="IPR023005">
    <property type="entry name" value="Nucleoside_diP_kinase_AS"/>
</dbReference>
<dbReference type="NCBIfam" id="NF001908">
    <property type="entry name" value="PRK00668.1"/>
    <property type="match status" value="1"/>
</dbReference>
<dbReference type="PANTHER" id="PTHR46161">
    <property type="entry name" value="NUCLEOSIDE DIPHOSPHATE KINASE"/>
    <property type="match status" value="1"/>
</dbReference>
<dbReference type="PANTHER" id="PTHR46161:SF3">
    <property type="entry name" value="NUCLEOSIDE DIPHOSPHATE KINASE DDB_G0292928-RELATED"/>
    <property type="match status" value="1"/>
</dbReference>
<dbReference type="Pfam" id="PF00334">
    <property type="entry name" value="NDK"/>
    <property type="match status" value="1"/>
</dbReference>
<dbReference type="PRINTS" id="PR01243">
    <property type="entry name" value="NUCDPKINASE"/>
</dbReference>
<dbReference type="SMART" id="SM00562">
    <property type="entry name" value="NDK"/>
    <property type="match status" value="1"/>
</dbReference>
<dbReference type="SUPFAM" id="SSF54919">
    <property type="entry name" value="Nucleoside diphosphate kinase, NDK"/>
    <property type="match status" value="1"/>
</dbReference>
<dbReference type="PROSITE" id="PS00469">
    <property type="entry name" value="NDPK"/>
    <property type="match status" value="1"/>
</dbReference>
<dbReference type="PROSITE" id="PS51374">
    <property type="entry name" value="NDPK_LIKE"/>
    <property type="match status" value="1"/>
</dbReference>
<organism>
    <name type="scientific">Rhizobium johnstonii (strain DSM 114642 / LMG 32736 / 3841)</name>
    <name type="common">Rhizobium leguminosarum bv. viciae</name>
    <dbReference type="NCBI Taxonomy" id="216596"/>
    <lineage>
        <taxon>Bacteria</taxon>
        <taxon>Pseudomonadati</taxon>
        <taxon>Pseudomonadota</taxon>
        <taxon>Alphaproteobacteria</taxon>
        <taxon>Hyphomicrobiales</taxon>
        <taxon>Rhizobiaceae</taxon>
        <taxon>Rhizobium/Agrobacterium group</taxon>
        <taxon>Rhizobium</taxon>
        <taxon>Rhizobium johnstonii</taxon>
    </lineage>
</organism>
<accession>Q1MIY5</accession>
<comment type="function">
    <text evidence="1">Major role in the synthesis of nucleoside triphosphates other than ATP. The ATP gamma phosphate is transferred to the NDP beta phosphate via a ping-pong mechanism, using a phosphorylated active-site intermediate.</text>
</comment>
<comment type="catalytic activity">
    <reaction evidence="1">
        <text>a 2'-deoxyribonucleoside 5'-diphosphate + ATP = a 2'-deoxyribonucleoside 5'-triphosphate + ADP</text>
        <dbReference type="Rhea" id="RHEA:44640"/>
        <dbReference type="ChEBI" id="CHEBI:30616"/>
        <dbReference type="ChEBI" id="CHEBI:61560"/>
        <dbReference type="ChEBI" id="CHEBI:73316"/>
        <dbReference type="ChEBI" id="CHEBI:456216"/>
        <dbReference type="EC" id="2.7.4.6"/>
    </reaction>
</comment>
<comment type="catalytic activity">
    <reaction evidence="1">
        <text>a ribonucleoside 5'-diphosphate + ATP = a ribonucleoside 5'-triphosphate + ADP</text>
        <dbReference type="Rhea" id="RHEA:18113"/>
        <dbReference type="ChEBI" id="CHEBI:30616"/>
        <dbReference type="ChEBI" id="CHEBI:57930"/>
        <dbReference type="ChEBI" id="CHEBI:61557"/>
        <dbReference type="ChEBI" id="CHEBI:456216"/>
        <dbReference type="EC" id="2.7.4.6"/>
    </reaction>
</comment>
<comment type="cofactor">
    <cofactor evidence="1">
        <name>Mg(2+)</name>
        <dbReference type="ChEBI" id="CHEBI:18420"/>
    </cofactor>
</comment>
<comment type="subunit">
    <text evidence="1">Homotetramer.</text>
</comment>
<comment type="subcellular location">
    <subcellularLocation>
        <location evidence="1">Cytoplasm</location>
    </subcellularLocation>
</comment>
<comment type="similarity">
    <text evidence="1">Belongs to the NDK family.</text>
</comment>